<sequence>MIKKIILFFAVLIAIVIGQQPLNVVPYPQQVSIGTCVIPVAPGSILIESNIESATFSVSMDRYTNLFFPFSNESEPSSNESFLLSVTIYSDDETLQLGIDESYSLSIEQGSYQLKATNIYGAMRGLETFKQLIVYNELENSYSIVCVSISDSPRYPWRGFMVDSARHYIPKNMILHMIDSLGFSKFNTLHWHMVDAVAFPVESTTYPDLTKGAFSPSATFSHDDIQEVVAYAKTYGIRVIPEFDIPGHAAAWGIGYPELVATCPDYAANVNNIPLDISNPATFTFIQNLFTEIAPLFIDNYFHTGGDELVTGCWLEDPAIANWMTKMGFSTTDAFQYFENNLDVTMKSINRTKITWNDPIDYGVQLNPETLVQVWSSGSDLQGIVNSGYKALVSFAWYLDKQNPDNNIHYEWQDTWQDFYAADPTNNISTNAENIIGGEATMWAEQINQVNWDVRVWPRAIGIAERLWSAQSVNSVSLALPRIGHFTCDLSRRGIQSGPLFPDYCPMQDDLVFTMKPNTKLSKSEIKLILNK</sequence>
<name>HEXA1_DICDI</name>
<reference key="1">
    <citation type="journal article" date="1988" name="J. Biol. Chem.">
        <title>Molecular cloning of the cDNA which encodes beta-N-acetylhexosaminidase A from Dictyostelium discoideum. Complete amino acid sequence and homology with the human enzyme.</title>
        <authorList>
            <person name="Graham T.R."/>
            <person name="Zassenhaus H.P."/>
            <person name="Kaplan A."/>
        </authorList>
    </citation>
    <scope>NUCLEOTIDE SEQUENCE [MRNA]</scope>
    <scope>PROTEIN SEQUENCE OF 105-113; 260-276 AND 295-306</scope>
    <scope>FUNCTION</scope>
    <scope>PTM</scope>
    <scope>GLYCOSYLATION</scope>
    <scope>SUBCELLULAR LOCATION</scope>
</reference>
<reference key="2">
    <citation type="journal article" date="2005" name="Nature">
        <title>The genome of the social amoeba Dictyostelium discoideum.</title>
        <authorList>
            <person name="Eichinger L."/>
            <person name="Pachebat J.A."/>
            <person name="Gloeckner G."/>
            <person name="Rajandream M.A."/>
            <person name="Sucgang R."/>
            <person name="Berriman M."/>
            <person name="Song J."/>
            <person name="Olsen R."/>
            <person name="Szafranski K."/>
            <person name="Xu Q."/>
            <person name="Tunggal B."/>
            <person name="Kummerfeld S."/>
            <person name="Madera M."/>
            <person name="Konfortov B.A."/>
            <person name="Rivero F."/>
            <person name="Bankier A.T."/>
            <person name="Lehmann R."/>
            <person name="Hamlin N."/>
            <person name="Davies R."/>
            <person name="Gaudet P."/>
            <person name="Fey P."/>
            <person name="Pilcher K."/>
            <person name="Chen G."/>
            <person name="Saunders D."/>
            <person name="Sodergren E.J."/>
            <person name="Davis P."/>
            <person name="Kerhornou A."/>
            <person name="Nie X."/>
            <person name="Hall N."/>
            <person name="Anjard C."/>
            <person name="Hemphill L."/>
            <person name="Bason N."/>
            <person name="Farbrother P."/>
            <person name="Desany B."/>
            <person name="Just E."/>
            <person name="Morio T."/>
            <person name="Rost R."/>
            <person name="Churcher C.M."/>
            <person name="Cooper J."/>
            <person name="Haydock S."/>
            <person name="van Driessche N."/>
            <person name="Cronin A."/>
            <person name="Goodhead I."/>
            <person name="Muzny D.M."/>
            <person name="Mourier T."/>
            <person name="Pain A."/>
            <person name="Lu M."/>
            <person name="Harper D."/>
            <person name="Lindsay R."/>
            <person name="Hauser H."/>
            <person name="James K.D."/>
            <person name="Quiles M."/>
            <person name="Madan Babu M."/>
            <person name="Saito T."/>
            <person name="Buchrieser C."/>
            <person name="Wardroper A."/>
            <person name="Felder M."/>
            <person name="Thangavelu M."/>
            <person name="Johnson D."/>
            <person name="Knights A."/>
            <person name="Loulseged H."/>
            <person name="Mungall K.L."/>
            <person name="Oliver K."/>
            <person name="Price C."/>
            <person name="Quail M.A."/>
            <person name="Urushihara H."/>
            <person name="Hernandez J."/>
            <person name="Rabbinowitsch E."/>
            <person name="Steffen D."/>
            <person name="Sanders M."/>
            <person name="Ma J."/>
            <person name="Kohara Y."/>
            <person name="Sharp S."/>
            <person name="Simmonds M.N."/>
            <person name="Spiegler S."/>
            <person name="Tivey A."/>
            <person name="Sugano S."/>
            <person name="White B."/>
            <person name="Walker D."/>
            <person name="Woodward J.R."/>
            <person name="Winckler T."/>
            <person name="Tanaka Y."/>
            <person name="Shaulsky G."/>
            <person name="Schleicher M."/>
            <person name="Weinstock G.M."/>
            <person name="Rosenthal A."/>
            <person name="Cox E.C."/>
            <person name="Chisholm R.L."/>
            <person name="Gibbs R.A."/>
            <person name="Loomis W.F."/>
            <person name="Platzer M."/>
            <person name="Kay R.R."/>
            <person name="Williams J.G."/>
            <person name="Dear P.H."/>
            <person name="Noegel A.A."/>
            <person name="Barrell B.G."/>
            <person name="Kuspa A."/>
        </authorList>
    </citation>
    <scope>NUCLEOTIDE SEQUENCE [LARGE SCALE GENOMIC DNA]</scope>
    <source>
        <strain>AX4</strain>
    </source>
</reference>
<reference key="3">
    <citation type="journal article" date="1978" name="Genetics">
        <title>Genetic analysis of the gene for N-acetylglucosaminidase in Dictyostelium discoideum.</title>
        <authorList>
            <person name="Loomis W.F."/>
        </authorList>
    </citation>
    <scope>SUBUNIT</scope>
    <source>
        <strain>NC-4</strain>
    </source>
</reference>
<dbReference type="EC" id="3.2.1.52"/>
<dbReference type="EMBL" id="J04065">
    <property type="protein sequence ID" value="AAA33230.1"/>
    <property type="molecule type" value="mRNA"/>
</dbReference>
<dbReference type="EMBL" id="AAFI02000096">
    <property type="protein sequence ID" value="EAL63881.1"/>
    <property type="molecule type" value="Genomic_DNA"/>
</dbReference>
<dbReference type="PIR" id="A30766">
    <property type="entry name" value="A30766"/>
</dbReference>
<dbReference type="RefSeq" id="XP_637398.1">
    <property type="nucleotide sequence ID" value="XM_632306.1"/>
</dbReference>
<dbReference type="SMR" id="P13723"/>
<dbReference type="FunCoup" id="P13723">
    <property type="interactions" value="107"/>
</dbReference>
<dbReference type="STRING" id="44689.P13723"/>
<dbReference type="CAZy" id="GH20">
    <property type="family name" value="Glycoside Hydrolase Family 20"/>
</dbReference>
<dbReference type="GlyCosmos" id="P13723">
    <property type="glycosylation" value="4 sites, No reported glycans"/>
</dbReference>
<dbReference type="GlyGen" id="P13723">
    <property type="glycosylation" value="4 sites"/>
</dbReference>
<dbReference type="PaxDb" id="44689-DDB0191256"/>
<dbReference type="EnsemblProtists" id="EAL63881">
    <property type="protein sequence ID" value="EAL63881"/>
    <property type="gene ID" value="DDB_G0287033"/>
</dbReference>
<dbReference type="GeneID" id="8625929"/>
<dbReference type="KEGG" id="ddi:DDB_G0287033"/>
<dbReference type="dictyBase" id="DDB_G0287033">
    <property type="gene designation" value="nagA"/>
</dbReference>
<dbReference type="VEuPathDB" id="AmoebaDB:DDB_G0287033"/>
<dbReference type="eggNOG" id="KOG2499">
    <property type="taxonomic scope" value="Eukaryota"/>
</dbReference>
<dbReference type="HOGENOM" id="CLU_007082_0_4_1"/>
<dbReference type="InParanoid" id="P13723"/>
<dbReference type="OMA" id="GHDVVMC"/>
<dbReference type="PhylomeDB" id="P13723"/>
<dbReference type="Reactome" id="R-DDI-2022857">
    <property type="pathway name" value="Keratan sulfate degradation"/>
</dbReference>
<dbReference type="Reactome" id="R-DDI-2024101">
    <property type="pathway name" value="CS/DS degradation"/>
</dbReference>
<dbReference type="Reactome" id="R-DDI-2160916">
    <property type="pathway name" value="Hyaluronan uptake and degradation"/>
</dbReference>
<dbReference type="Reactome" id="R-DDI-9840310">
    <property type="pathway name" value="Glycosphingolipid catabolism"/>
</dbReference>
<dbReference type="PRO" id="PR:P13723"/>
<dbReference type="Proteomes" id="UP000002195">
    <property type="component" value="Chromosome 4"/>
</dbReference>
<dbReference type="GO" id="GO:0005764">
    <property type="term" value="C:lysosome"/>
    <property type="evidence" value="ECO:0000314"/>
    <property type="project" value="dictyBase"/>
</dbReference>
<dbReference type="GO" id="GO:0016020">
    <property type="term" value="C:membrane"/>
    <property type="evidence" value="ECO:0000318"/>
    <property type="project" value="GO_Central"/>
</dbReference>
<dbReference type="GO" id="GO:0004563">
    <property type="term" value="F:beta-N-acetylhexosaminidase activity"/>
    <property type="evidence" value="ECO:0000314"/>
    <property type="project" value="dictyBase"/>
</dbReference>
<dbReference type="GO" id="GO:0005975">
    <property type="term" value="P:carbohydrate metabolic process"/>
    <property type="evidence" value="ECO:0007669"/>
    <property type="project" value="InterPro"/>
</dbReference>
<dbReference type="GO" id="GO:0030203">
    <property type="term" value="P:glycosaminoglycan metabolic process"/>
    <property type="evidence" value="ECO:0000318"/>
    <property type="project" value="GO_Central"/>
</dbReference>
<dbReference type="GO" id="GO:0006491">
    <property type="term" value="P:N-glycan processing"/>
    <property type="evidence" value="ECO:0000318"/>
    <property type="project" value="GO_Central"/>
</dbReference>
<dbReference type="CDD" id="cd06562">
    <property type="entry name" value="GH20_HexA_HexB-like"/>
    <property type="match status" value="1"/>
</dbReference>
<dbReference type="FunFam" id="3.20.20.80:FF:000063">
    <property type="entry name" value="Beta-hexosaminidase"/>
    <property type="match status" value="1"/>
</dbReference>
<dbReference type="Gene3D" id="3.30.379.10">
    <property type="entry name" value="Chitobiase/beta-hexosaminidase domain 2-like"/>
    <property type="match status" value="1"/>
</dbReference>
<dbReference type="Gene3D" id="3.20.20.80">
    <property type="entry name" value="Glycosidases"/>
    <property type="match status" value="1"/>
</dbReference>
<dbReference type="InterPro" id="IPR025705">
    <property type="entry name" value="Beta_hexosaminidase_sua/sub"/>
</dbReference>
<dbReference type="InterPro" id="IPR015883">
    <property type="entry name" value="Glyco_hydro_20_cat"/>
</dbReference>
<dbReference type="InterPro" id="IPR017853">
    <property type="entry name" value="Glycoside_hydrolase_SF"/>
</dbReference>
<dbReference type="InterPro" id="IPR029018">
    <property type="entry name" value="Hex-like_dom2"/>
</dbReference>
<dbReference type="InterPro" id="IPR029019">
    <property type="entry name" value="HEX_eukaryotic_N"/>
</dbReference>
<dbReference type="PANTHER" id="PTHR22600">
    <property type="entry name" value="BETA-HEXOSAMINIDASE"/>
    <property type="match status" value="1"/>
</dbReference>
<dbReference type="PANTHER" id="PTHR22600:SF54">
    <property type="entry name" value="BETA-HEXOSAMINIDASE SUBUNIT A1-RELATED"/>
    <property type="match status" value="1"/>
</dbReference>
<dbReference type="Pfam" id="PF00728">
    <property type="entry name" value="Glyco_hydro_20"/>
    <property type="match status" value="1"/>
</dbReference>
<dbReference type="Pfam" id="PF14845">
    <property type="entry name" value="Glycohydro_20b2"/>
    <property type="match status" value="1"/>
</dbReference>
<dbReference type="PIRSF" id="PIRSF001093">
    <property type="entry name" value="B-hxosamndse_ab_euk"/>
    <property type="match status" value="1"/>
</dbReference>
<dbReference type="PRINTS" id="PR00738">
    <property type="entry name" value="GLHYDRLASE20"/>
</dbReference>
<dbReference type="SUPFAM" id="SSF51445">
    <property type="entry name" value="(Trans)glycosidases"/>
    <property type="match status" value="1"/>
</dbReference>
<dbReference type="SUPFAM" id="SSF55545">
    <property type="entry name" value="beta-N-acetylhexosaminidase-like domain"/>
    <property type="match status" value="1"/>
</dbReference>
<feature type="signal peptide" evidence="2">
    <location>
        <begin position="1"/>
        <end position="18"/>
    </location>
</feature>
<feature type="chain" id="PRO_0000012010" description="Beta-hexosaminidase subunit A1">
    <location>
        <begin position="19"/>
        <end position="532"/>
    </location>
</feature>
<feature type="active site" description="Proton donor" evidence="1">
    <location>
        <position position="308"/>
    </location>
</feature>
<feature type="glycosylation site" description="N-linked (GlcNAc...) asparagine" evidence="2">
    <location>
        <position position="72"/>
    </location>
</feature>
<feature type="glycosylation site" description="N-linked (GlcNAc...) asparagine" evidence="2">
    <location>
        <position position="79"/>
    </location>
</feature>
<feature type="glycosylation site" description="N-linked (GlcNAc...) asparagine" evidence="2">
    <location>
        <position position="350"/>
    </location>
</feature>
<feature type="glycosylation site" description="N-linked (GlcNAc...) asparagine" evidence="2">
    <location>
        <position position="427"/>
    </location>
</feature>
<gene>
    <name type="primary">hexa1</name>
    <name type="synonym">nagA</name>
    <name type="ORF">DDB_G0287033</name>
</gene>
<keyword id="KW-0903">Direct protein sequencing</keyword>
<keyword id="KW-0325">Glycoprotein</keyword>
<keyword id="KW-0326">Glycosidase</keyword>
<keyword id="KW-0378">Hydrolase</keyword>
<keyword id="KW-0458">Lysosome</keyword>
<keyword id="KW-1185">Reference proteome</keyword>
<keyword id="KW-0732">Signal</keyword>
<evidence type="ECO:0000250" key="1"/>
<evidence type="ECO:0000255" key="2"/>
<evidence type="ECO:0000269" key="3">
    <source>
    </source>
</evidence>
<evidence type="ECO:0000269" key="4">
    <source>
    </source>
</evidence>
<evidence type="ECO:0000305" key="5"/>
<protein>
    <recommendedName>
        <fullName>Beta-hexosaminidase subunit A1</fullName>
        <ecNumber>3.2.1.52</ecNumber>
    </recommendedName>
    <alternativeName>
        <fullName>Beta-N-acetylhexosaminidase subunit A1</fullName>
    </alternativeName>
    <alternativeName>
        <fullName>N-acetyl-beta-glucosaminidase subunit A1</fullName>
    </alternativeName>
</protein>
<accession>P13723</accession>
<accession>Q54KX2</accession>
<proteinExistence type="evidence at protein level"/>
<comment type="function">
    <text evidence="3">Responsible for the degradation of GM2 gangliosides, and a variety of other molecules containing terminal N-acetyl hexosamines. This enzyme plays a role during the slug stage of development in the maintenance of pseudoplasmodia of normal size.</text>
</comment>
<comment type="catalytic activity">
    <reaction>
        <text>Hydrolysis of terminal non-reducing N-acetyl-D-hexosamine residues in N-acetyl-beta-D-hexosaminides.</text>
        <dbReference type="EC" id="3.2.1.52"/>
    </reaction>
</comment>
<comment type="subunit">
    <text evidence="4">Dimer.</text>
</comment>
<comment type="subcellular location">
    <subcellularLocation>
        <location evidence="3">Lysosome</location>
    </subcellularLocation>
</comment>
<comment type="PTM">
    <text>The N-terminus is blocked.</text>
</comment>
<comment type="PTM">
    <text evidence="3">N-glycosylated.</text>
</comment>
<comment type="similarity">
    <text evidence="5">Belongs to the glycosyl hydrolase 20 family.</text>
</comment>
<organism>
    <name type="scientific">Dictyostelium discoideum</name>
    <name type="common">Social amoeba</name>
    <dbReference type="NCBI Taxonomy" id="44689"/>
    <lineage>
        <taxon>Eukaryota</taxon>
        <taxon>Amoebozoa</taxon>
        <taxon>Evosea</taxon>
        <taxon>Eumycetozoa</taxon>
        <taxon>Dictyostelia</taxon>
        <taxon>Dictyosteliales</taxon>
        <taxon>Dictyosteliaceae</taxon>
        <taxon>Dictyostelium</taxon>
    </lineage>
</organism>